<keyword id="KW-0963">Cytoplasm</keyword>
<keyword id="KW-0378">Hydrolase</keyword>
<keyword id="KW-0694">RNA-binding</keyword>
<keyword id="KW-0820">tRNA-binding</keyword>
<name>DTD_YERPY</name>
<organism>
    <name type="scientific">Yersinia pseudotuberculosis serotype O:3 (strain YPIII)</name>
    <dbReference type="NCBI Taxonomy" id="502800"/>
    <lineage>
        <taxon>Bacteria</taxon>
        <taxon>Pseudomonadati</taxon>
        <taxon>Pseudomonadota</taxon>
        <taxon>Gammaproteobacteria</taxon>
        <taxon>Enterobacterales</taxon>
        <taxon>Yersiniaceae</taxon>
        <taxon>Yersinia</taxon>
    </lineage>
</organism>
<protein>
    <recommendedName>
        <fullName evidence="1">D-aminoacyl-tRNA deacylase</fullName>
        <shortName evidence="1">DTD</shortName>
        <ecNumber evidence="1">3.1.1.96</ecNumber>
    </recommendedName>
    <alternativeName>
        <fullName evidence="1">Gly-tRNA(Ala) deacylase</fullName>
    </alternativeName>
</protein>
<proteinExistence type="inferred from homology"/>
<comment type="function">
    <text evidence="1">An aminoacyl-tRNA editing enzyme that deacylates mischarged D-aminoacyl-tRNAs. Also deacylates mischarged glycyl-tRNA(Ala), protecting cells against glycine mischarging by AlaRS. Acts via tRNA-based rather than protein-based catalysis; rejects L-amino acids rather than detecting D-amino acids in the active site. By recycling D-aminoacyl-tRNA to D-amino acids and free tRNA molecules, this enzyme counteracts the toxicity associated with the formation of D-aminoacyl-tRNA entities in vivo and helps enforce protein L-homochirality.</text>
</comment>
<comment type="catalytic activity">
    <reaction evidence="1">
        <text>glycyl-tRNA(Ala) + H2O = tRNA(Ala) + glycine + H(+)</text>
        <dbReference type="Rhea" id="RHEA:53744"/>
        <dbReference type="Rhea" id="RHEA-COMP:9657"/>
        <dbReference type="Rhea" id="RHEA-COMP:13640"/>
        <dbReference type="ChEBI" id="CHEBI:15377"/>
        <dbReference type="ChEBI" id="CHEBI:15378"/>
        <dbReference type="ChEBI" id="CHEBI:57305"/>
        <dbReference type="ChEBI" id="CHEBI:78442"/>
        <dbReference type="ChEBI" id="CHEBI:78522"/>
        <dbReference type="EC" id="3.1.1.96"/>
    </reaction>
</comment>
<comment type="catalytic activity">
    <reaction evidence="1">
        <text>a D-aminoacyl-tRNA + H2O = a tRNA + a D-alpha-amino acid + H(+)</text>
        <dbReference type="Rhea" id="RHEA:13953"/>
        <dbReference type="Rhea" id="RHEA-COMP:10123"/>
        <dbReference type="Rhea" id="RHEA-COMP:10124"/>
        <dbReference type="ChEBI" id="CHEBI:15377"/>
        <dbReference type="ChEBI" id="CHEBI:15378"/>
        <dbReference type="ChEBI" id="CHEBI:59871"/>
        <dbReference type="ChEBI" id="CHEBI:78442"/>
        <dbReference type="ChEBI" id="CHEBI:79333"/>
        <dbReference type="EC" id="3.1.1.96"/>
    </reaction>
</comment>
<comment type="subunit">
    <text evidence="1">Homodimer.</text>
</comment>
<comment type="subcellular location">
    <subcellularLocation>
        <location evidence="1">Cytoplasm</location>
    </subcellularLocation>
</comment>
<comment type="domain">
    <text evidence="1">A Gly-cisPro motif from one monomer fits into the active site of the other monomer to allow specific chiral rejection of L-amino acids.</text>
</comment>
<comment type="similarity">
    <text evidence="1">Belongs to the DTD family.</text>
</comment>
<sequence length="145" mass="15863">MIALIQRALSASVVVEGNIVGEIGPGLLVLLGVEQGDTEQKAQRLCERVLGYRIFSDENDKMNLNVQQAGGSVLVVSQFTLVADTQKGMRPSFSRGAIPQEADRLYQYFVAQCRERGVKTETGLFAADMKVSLVNDGPVTFWLQV</sequence>
<evidence type="ECO:0000255" key="1">
    <source>
        <dbReference type="HAMAP-Rule" id="MF_00518"/>
    </source>
</evidence>
<accession>B1JR03</accession>
<feature type="chain" id="PRO_1000127595" description="D-aminoacyl-tRNA deacylase">
    <location>
        <begin position="1"/>
        <end position="145"/>
    </location>
</feature>
<feature type="short sequence motif" description="Gly-cisPro motif, important for rejection of L-amino acids" evidence="1">
    <location>
        <begin position="137"/>
        <end position="138"/>
    </location>
</feature>
<dbReference type="EC" id="3.1.1.96" evidence="1"/>
<dbReference type="EMBL" id="CP000950">
    <property type="protein sequence ID" value="ACA70444.1"/>
    <property type="molecule type" value="Genomic_DNA"/>
</dbReference>
<dbReference type="RefSeq" id="WP_002209009.1">
    <property type="nucleotide sequence ID" value="NZ_CP009792.1"/>
</dbReference>
<dbReference type="SMR" id="B1JR03"/>
<dbReference type="GeneID" id="57974561"/>
<dbReference type="KEGG" id="ypy:YPK_4185"/>
<dbReference type="PATRIC" id="fig|502800.11.peg.536"/>
<dbReference type="GO" id="GO:0005737">
    <property type="term" value="C:cytoplasm"/>
    <property type="evidence" value="ECO:0007669"/>
    <property type="project" value="UniProtKB-SubCell"/>
</dbReference>
<dbReference type="GO" id="GO:0051500">
    <property type="term" value="F:D-tyrosyl-tRNA(Tyr) deacylase activity"/>
    <property type="evidence" value="ECO:0007669"/>
    <property type="project" value="TreeGrafter"/>
</dbReference>
<dbReference type="GO" id="GO:0106026">
    <property type="term" value="F:Gly-tRNA(Ala) deacylase activity"/>
    <property type="evidence" value="ECO:0007669"/>
    <property type="project" value="UniProtKB-UniRule"/>
</dbReference>
<dbReference type="GO" id="GO:0043908">
    <property type="term" value="F:Ser(Gly)-tRNA(Ala) hydrolase activity"/>
    <property type="evidence" value="ECO:0007669"/>
    <property type="project" value="UniProtKB-UniRule"/>
</dbReference>
<dbReference type="GO" id="GO:0000049">
    <property type="term" value="F:tRNA binding"/>
    <property type="evidence" value="ECO:0007669"/>
    <property type="project" value="UniProtKB-UniRule"/>
</dbReference>
<dbReference type="GO" id="GO:0019478">
    <property type="term" value="P:D-amino acid catabolic process"/>
    <property type="evidence" value="ECO:0007669"/>
    <property type="project" value="UniProtKB-UniRule"/>
</dbReference>
<dbReference type="CDD" id="cd00563">
    <property type="entry name" value="Dtyr_deacylase"/>
    <property type="match status" value="1"/>
</dbReference>
<dbReference type="FunFam" id="3.50.80.10:FF:000001">
    <property type="entry name" value="D-aminoacyl-tRNA deacylase"/>
    <property type="match status" value="1"/>
</dbReference>
<dbReference type="Gene3D" id="3.50.80.10">
    <property type="entry name" value="D-tyrosyl-tRNA(Tyr) deacylase"/>
    <property type="match status" value="1"/>
</dbReference>
<dbReference type="HAMAP" id="MF_00518">
    <property type="entry name" value="Deacylase_Dtd"/>
    <property type="match status" value="1"/>
</dbReference>
<dbReference type="InterPro" id="IPR003732">
    <property type="entry name" value="Daa-tRNA_deacyls_DTD"/>
</dbReference>
<dbReference type="InterPro" id="IPR023509">
    <property type="entry name" value="DTD-like_sf"/>
</dbReference>
<dbReference type="NCBIfam" id="TIGR00256">
    <property type="entry name" value="D-aminoacyl-tRNA deacylase"/>
    <property type="match status" value="1"/>
</dbReference>
<dbReference type="PANTHER" id="PTHR10472:SF5">
    <property type="entry name" value="D-AMINOACYL-TRNA DEACYLASE 1"/>
    <property type="match status" value="1"/>
</dbReference>
<dbReference type="PANTHER" id="PTHR10472">
    <property type="entry name" value="D-TYROSYL-TRNA TYR DEACYLASE"/>
    <property type="match status" value="1"/>
</dbReference>
<dbReference type="Pfam" id="PF02580">
    <property type="entry name" value="Tyr_Deacylase"/>
    <property type="match status" value="1"/>
</dbReference>
<dbReference type="SUPFAM" id="SSF69500">
    <property type="entry name" value="DTD-like"/>
    <property type="match status" value="1"/>
</dbReference>
<gene>
    <name evidence="1" type="primary">dtd</name>
    <name type="ordered locus">YPK_4185</name>
</gene>
<reference key="1">
    <citation type="submission" date="2008-02" db="EMBL/GenBank/DDBJ databases">
        <title>Complete sequence of Yersinia pseudotuberculosis YPIII.</title>
        <authorList>
            <consortium name="US DOE Joint Genome Institute"/>
            <person name="Copeland A."/>
            <person name="Lucas S."/>
            <person name="Lapidus A."/>
            <person name="Glavina del Rio T."/>
            <person name="Dalin E."/>
            <person name="Tice H."/>
            <person name="Bruce D."/>
            <person name="Goodwin L."/>
            <person name="Pitluck S."/>
            <person name="Munk A.C."/>
            <person name="Brettin T."/>
            <person name="Detter J.C."/>
            <person name="Han C."/>
            <person name="Tapia R."/>
            <person name="Schmutz J."/>
            <person name="Larimer F."/>
            <person name="Land M."/>
            <person name="Hauser L."/>
            <person name="Challacombe J.F."/>
            <person name="Green L."/>
            <person name="Lindler L.E."/>
            <person name="Nikolich M.P."/>
            <person name="Richardson P."/>
        </authorList>
    </citation>
    <scope>NUCLEOTIDE SEQUENCE [LARGE SCALE GENOMIC DNA]</scope>
    <source>
        <strain>YPIII</strain>
    </source>
</reference>